<name>CHAD_HUMAN</name>
<protein>
    <recommendedName>
        <fullName>Chondroadherin</fullName>
    </recommendedName>
    <alternativeName>
        <fullName>Cartilage leucine-rich protein</fullName>
    </alternativeName>
</protein>
<dbReference type="EMBL" id="U96769">
    <property type="protein sequence ID" value="AAC13410.1"/>
    <property type="molecule type" value="Genomic_DNA"/>
</dbReference>
<dbReference type="EMBL" id="U96767">
    <property type="protein sequence ID" value="AAC13410.1"/>
    <property type="status" value="JOINED"/>
    <property type="molecule type" value="Genomic_DNA"/>
</dbReference>
<dbReference type="EMBL" id="U96768">
    <property type="protein sequence ID" value="AAC13410.1"/>
    <property type="status" value="JOINED"/>
    <property type="molecule type" value="Genomic_DNA"/>
</dbReference>
<dbReference type="EMBL" id="AF371328">
    <property type="protein sequence ID" value="AAK51556.1"/>
    <property type="molecule type" value="mRNA"/>
</dbReference>
<dbReference type="EMBL" id="AK292177">
    <property type="protein sequence ID" value="BAF84866.1"/>
    <property type="molecule type" value="mRNA"/>
</dbReference>
<dbReference type="EMBL" id="CH471109">
    <property type="protein sequence ID" value="EAW94613.1"/>
    <property type="molecule type" value="Genomic_DNA"/>
</dbReference>
<dbReference type="EMBL" id="BC036360">
    <property type="protein sequence ID" value="AAH36360.1"/>
    <property type="molecule type" value="mRNA"/>
</dbReference>
<dbReference type="EMBL" id="BC073974">
    <property type="protein sequence ID" value="AAH73974.1"/>
    <property type="molecule type" value="mRNA"/>
</dbReference>
<dbReference type="CCDS" id="CCDS11568.1"/>
<dbReference type="RefSeq" id="NP_001258.2">
    <property type="nucleotide sequence ID" value="NM_001267.3"/>
</dbReference>
<dbReference type="RefSeq" id="XP_011522516.2">
    <property type="nucleotide sequence ID" value="XM_011524214.3"/>
</dbReference>
<dbReference type="RefSeq" id="XP_047291129.1">
    <property type="nucleotide sequence ID" value="XM_047435173.1"/>
</dbReference>
<dbReference type="RefSeq" id="XP_054170752.1">
    <property type="nucleotide sequence ID" value="XM_054314777.1"/>
</dbReference>
<dbReference type="RefSeq" id="XP_054170753.1">
    <property type="nucleotide sequence ID" value="XM_054314778.1"/>
</dbReference>
<dbReference type="PDB" id="5LFN">
    <property type="method" value="X-ray"/>
    <property type="resolution" value="2.10 A"/>
    <property type="chains" value="A/B/C/D=23-359"/>
</dbReference>
<dbReference type="PDB" id="5MX1">
    <property type="method" value="X-ray"/>
    <property type="resolution" value="2.17 A"/>
    <property type="chains" value="A/B=20-359"/>
</dbReference>
<dbReference type="PDBsum" id="5LFN"/>
<dbReference type="PDBsum" id="5MX1"/>
<dbReference type="SMR" id="O15335"/>
<dbReference type="BioGRID" id="107526">
    <property type="interactions" value="3"/>
</dbReference>
<dbReference type="CORUM" id="O15335"/>
<dbReference type="FunCoup" id="O15335">
    <property type="interactions" value="542"/>
</dbReference>
<dbReference type="IntAct" id="O15335">
    <property type="interactions" value="2"/>
</dbReference>
<dbReference type="STRING" id="9606.ENSP00000258969"/>
<dbReference type="GlyCosmos" id="O15335">
    <property type="glycosylation" value="1 site, No reported glycans"/>
</dbReference>
<dbReference type="GlyGen" id="O15335">
    <property type="glycosylation" value="1 site"/>
</dbReference>
<dbReference type="PhosphoSitePlus" id="O15335"/>
<dbReference type="BioMuta" id="CHAD"/>
<dbReference type="jPOST" id="O15335"/>
<dbReference type="MassIVE" id="O15335"/>
<dbReference type="PaxDb" id="9606-ENSP00000423812"/>
<dbReference type="PeptideAtlas" id="O15335"/>
<dbReference type="ProteomicsDB" id="48592"/>
<dbReference type="Antibodypedia" id="18082">
    <property type="antibodies" value="117 antibodies from 27 providers"/>
</dbReference>
<dbReference type="DNASU" id="1101"/>
<dbReference type="Ensembl" id="ENST00000258969.4">
    <property type="protein sequence ID" value="ENSP00000258969.4"/>
    <property type="gene ID" value="ENSG00000136457.10"/>
</dbReference>
<dbReference type="Ensembl" id="ENST00000508540.6">
    <property type="protein sequence ID" value="ENSP00000423812.1"/>
    <property type="gene ID" value="ENSG00000136457.10"/>
</dbReference>
<dbReference type="GeneID" id="1101"/>
<dbReference type="KEGG" id="hsa:1101"/>
<dbReference type="MANE-Select" id="ENST00000508540.6">
    <property type="protein sequence ID" value="ENSP00000423812.1"/>
    <property type="RefSeq nucleotide sequence ID" value="NM_001267.3"/>
    <property type="RefSeq protein sequence ID" value="NP_001258.2"/>
</dbReference>
<dbReference type="UCSC" id="uc010dbr.4">
    <property type="organism name" value="human"/>
</dbReference>
<dbReference type="AGR" id="HGNC:1909"/>
<dbReference type="CTD" id="1101"/>
<dbReference type="DisGeNET" id="1101"/>
<dbReference type="GeneCards" id="CHAD"/>
<dbReference type="HGNC" id="HGNC:1909">
    <property type="gene designation" value="CHAD"/>
</dbReference>
<dbReference type="HPA" id="ENSG00000136457">
    <property type="expression patterns" value="Tissue enhanced (brain, liver, pancreas)"/>
</dbReference>
<dbReference type="MIM" id="602178">
    <property type="type" value="gene"/>
</dbReference>
<dbReference type="neXtProt" id="NX_O15335"/>
<dbReference type="OpenTargets" id="ENSG00000136457"/>
<dbReference type="PharmGKB" id="PA26445"/>
<dbReference type="VEuPathDB" id="HostDB:ENSG00000136457"/>
<dbReference type="eggNOG" id="KOG0619">
    <property type="taxonomic scope" value="Eukaryota"/>
</dbReference>
<dbReference type="GeneTree" id="ENSGT00940000154464"/>
<dbReference type="HOGENOM" id="CLU_000288_18_6_1"/>
<dbReference type="InParanoid" id="O15335"/>
<dbReference type="OMA" id="QHCQVRE"/>
<dbReference type="OrthoDB" id="2190652at2759"/>
<dbReference type="PAN-GO" id="O15335">
    <property type="GO annotations" value="2 GO annotations based on evolutionary models"/>
</dbReference>
<dbReference type="PhylomeDB" id="O15335"/>
<dbReference type="TreeFam" id="TF332659"/>
<dbReference type="PathwayCommons" id="O15335"/>
<dbReference type="SignaLink" id="O15335"/>
<dbReference type="BioGRID-ORCS" id="1101">
    <property type="hits" value="15 hits in 1138 CRISPR screens"/>
</dbReference>
<dbReference type="GenomeRNAi" id="1101"/>
<dbReference type="Pharos" id="O15335">
    <property type="development level" value="Tbio"/>
</dbReference>
<dbReference type="PRO" id="PR:O15335"/>
<dbReference type="Proteomes" id="UP000005640">
    <property type="component" value="Chromosome 17"/>
</dbReference>
<dbReference type="RNAct" id="O15335">
    <property type="molecule type" value="protein"/>
</dbReference>
<dbReference type="Bgee" id="ENSG00000136457">
    <property type="expression patterns" value="Expressed in tibia and 114 other cell types or tissues"/>
</dbReference>
<dbReference type="ExpressionAtlas" id="O15335">
    <property type="expression patterns" value="baseline and differential"/>
</dbReference>
<dbReference type="GO" id="GO:0031012">
    <property type="term" value="C:extracellular matrix"/>
    <property type="evidence" value="ECO:0000318"/>
    <property type="project" value="GO_Central"/>
</dbReference>
<dbReference type="GO" id="GO:0005615">
    <property type="term" value="C:extracellular space"/>
    <property type="evidence" value="ECO:0000318"/>
    <property type="project" value="GO_Central"/>
</dbReference>
<dbReference type="GO" id="GO:0060348">
    <property type="term" value="P:bone development"/>
    <property type="evidence" value="ECO:0007669"/>
    <property type="project" value="Ensembl"/>
</dbReference>
<dbReference type="GO" id="GO:1900155">
    <property type="term" value="P:negative regulation of bone trabecula formation"/>
    <property type="evidence" value="ECO:0007669"/>
    <property type="project" value="Ensembl"/>
</dbReference>
<dbReference type="FunFam" id="3.80.10.10:FF:000059">
    <property type="entry name" value="Chondroadherin like"/>
    <property type="match status" value="1"/>
</dbReference>
<dbReference type="Gene3D" id="3.80.10.10">
    <property type="entry name" value="Ribonuclease Inhibitor"/>
    <property type="match status" value="1"/>
</dbReference>
<dbReference type="InterPro" id="IPR000483">
    <property type="entry name" value="Cys-rich_flank_reg_C"/>
</dbReference>
<dbReference type="InterPro" id="IPR001611">
    <property type="entry name" value="Leu-rich_rpt"/>
</dbReference>
<dbReference type="InterPro" id="IPR003591">
    <property type="entry name" value="Leu-rich_rpt_typical-subtyp"/>
</dbReference>
<dbReference type="InterPro" id="IPR032675">
    <property type="entry name" value="LRR_dom_sf"/>
</dbReference>
<dbReference type="InterPro" id="IPR050541">
    <property type="entry name" value="LRR_TM_domain-containing"/>
</dbReference>
<dbReference type="InterPro" id="IPR000372">
    <property type="entry name" value="LRRNT"/>
</dbReference>
<dbReference type="PANTHER" id="PTHR24369">
    <property type="entry name" value="ANTIGEN BSP, PUTATIVE-RELATED"/>
    <property type="match status" value="1"/>
</dbReference>
<dbReference type="PANTHER" id="PTHR24369:SF210">
    <property type="entry name" value="CHAOPTIN-RELATED"/>
    <property type="match status" value="1"/>
</dbReference>
<dbReference type="Pfam" id="PF13855">
    <property type="entry name" value="LRR_8"/>
    <property type="match status" value="3"/>
</dbReference>
<dbReference type="Pfam" id="PF01462">
    <property type="entry name" value="LRRNT"/>
    <property type="match status" value="1"/>
</dbReference>
<dbReference type="SMART" id="SM00369">
    <property type="entry name" value="LRR_TYP"/>
    <property type="match status" value="9"/>
</dbReference>
<dbReference type="SMART" id="SM00082">
    <property type="entry name" value="LRRCT"/>
    <property type="match status" value="1"/>
</dbReference>
<dbReference type="SMART" id="SM00013">
    <property type="entry name" value="LRRNT"/>
    <property type="match status" value="1"/>
</dbReference>
<dbReference type="SUPFAM" id="SSF52058">
    <property type="entry name" value="L domain-like"/>
    <property type="match status" value="1"/>
</dbReference>
<dbReference type="PROSITE" id="PS51450">
    <property type="entry name" value="LRR"/>
    <property type="match status" value="10"/>
</dbReference>
<proteinExistence type="evidence at protein level"/>
<reference key="1">
    <citation type="journal article" date="1997" name="Genomics">
        <title>The structure and chromosome location of the human chondroadherin gene (CHAD).</title>
        <authorList>
            <person name="Grover J."/>
            <person name="Chen X.-N."/>
            <person name="Korenberg J.R."/>
            <person name="Roughley P.J."/>
        </authorList>
    </citation>
    <scope>NUCLEOTIDE SEQUENCE [GENOMIC DNA]</scope>
</reference>
<reference key="2">
    <citation type="journal article" date="2001" name="J. Biol. Chem.">
        <title>Association of chondroadherin with collagen type II.</title>
        <authorList>
            <person name="Maansson B."/>
            <person name="Wenglen C."/>
            <person name="Moergelin M."/>
            <person name="Saxne T."/>
            <person name="Heinegaard D."/>
        </authorList>
    </citation>
    <scope>NUCLEOTIDE SEQUENCE [MRNA]</scope>
</reference>
<reference key="3">
    <citation type="journal article" date="2004" name="Nat. Genet.">
        <title>Complete sequencing and characterization of 21,243 full-length human cDNAs.</title>
        <authorList>
            <person name="Ota T."/>
            <person name="Suzuki Y."/>
            <person name="Nishikawa T."/>
            <person name="Otsuki T."/>
            <person name="Sugiyama T."/>
            <person name="Irie R."/>
            <person name="Wakamatsu A."/>
            <person name="Hayashi K."/>
            <person name="Sato H."/>
            <person name="Nagai K."/>
            <person name="Kimura K."/>
            <person name="Makita H."/>
            <person name="Sekine M."/>
            <person name="Obayashi M."/>
            <person name="Nishi T."/>
            <person name="Shibahara T."/>
            <person name="Tanaka T."/>
            <person name="Ishii S."/>
            <person name="Yamamoto J."/>
            <person name="Saito K."/>
            <person name="Kawai Y."/>
            <person name="Isono Y."/>
            <person name="Nakamura Y."/>
            <person name="Nagahari K."/>
            <person name="Murakami K."/>
            <person name="Yasuda T."/>
            <person name="Iwayanagi T."/>
            <person name="Wagatsuma M."/>
            <person name="Shiratori A."/>
            <person name="Sudo H."/>
            <person name="Hosoiri T."/>
            <person name="Kaku Y."/>
            <person name="Kodaira H."/>
            <person name="Kondo H."/>
            <person name="Sugawara M."/>
            <person name="Takahashi M."/>
            <person name="Kanda K."/>
            <person name="Yokoi T."/>
            <person name="Furuya T."/>
            <person name="Kikkawa E."/>
            <person name="Omura Y."/>
            <person name="Abe K."/>
            <person name="Kamihara K."/>
            <person name="Katsuta N."/>
            <person name="Sato K."/>
            <person name="Tanikawa M."/>
            <person name="Yamazaki M."/>
            <person name="Ninomiya K."/>
            <person name="Ishibashi T."/>
            <person name="Yamashita H."/>
            <person name="Murakawa K."/>
            <person name="Fujimori K."/>
            <person name="Tanai H."/>
            <person name="Kimata M."/>
            <person name="Watanabe M."/>
            <person name="Hiraoka S."/>
            <person name="Chiba Y."/>
            <person name="Ishida S."/>
            <person name="Ono Y."/>
            <person name="Takiguchi S."/>
            <person name="Watanabe S."/>
            <person name="Yosida M."/>
            <person name="Hotuta T."/>
            <person name="Kusano J."/>
            <person name="Kanehori K."/>
            <person name="Takahashi-Fujii A."/>
            <person name="Hara H."/>
            <person name="Tanase T.-O."/>
            <person name="Nomura Y."/>
            <person name="Togiya S."/>
            <person name="Komai F."/>
            <person name="Hara R."/>
            <person name="Takeuchi K."/>
            <person name="Arita M."/>
            <person name="Imose N."/>
            <person name="Musashino K."/>
            <person name="Yuuki H."/>
            <person name="Oshima A."/>
            <person name="Sasaki N."/>
            <person name="Aotsuka S."/>
            <person name="Yoshikawa Y."/>
            <person name="Matsunawa H."/>
            <person name="Ichihara T."/>
            <person name="Shiohata N."/>
            <person name="Sano S."/>
            <person name="Moriya S."/>
            <person name="Momiyama H."/>
            <person name="Satoh N."/>
            <person name="Takami S."/>
            <person name="Terashima Y."/>
            <person name="Suzuki O."/>
            <person name="Nakagawa S."/>
            <person name="Senoh A."/>
            <person name="Mizoguchi H."/>
            <person name="Goto Y."/>
            <person name="Shimizu F."/>
            <person name="Wakebe H."/>
            <person name="Hishigaki H."/>
            <person name="Watanabe T."/>
            <person name="Sugiyama A."/>
            <person name="Takemoto M."/>
            <person name="Kawakami B."/>
            <person name="Yamazaki M."/>
            <person name="Watanabe K."/>
            <person name="Kumagai A."/>
            <person name="Itakura S."/>
            <person name="Fukuzumi Y."/>
            <person name="Fujimori Y."/>
            <person name="Komiyama M."/>
            <person name="Tashiro H."/>
            <person name="Tanigami A."/>
            <person name="Fujiwara T."/>
            <person name="Ono T."/>
            <person name="Yamada K."/>
            <person name="Fujii Y."/>
            <person name="Ozaki K."/>
            <person name="Hirao M."/>
            <person name="Ohmori Y."/>
            <person name="Kawabata A."/>
            <person name="Hikiji T."/>
            <person name="Kobatake N."/>
            <person name="Inagaki H."/>
            <person name="Ikema Y."/>
            <person name="Okamoto S."/>
            <person name="Okitani R."/>
            <person name="Kawakami T."/>
            <person name="Noguchi S."/>
            <person name="Itoh T."/>
            <person name="Shigeta K."/>
            <person name="Senba T."/>
            <person name="Matsumura K."/>
            <person name="Nakajima Y."/>
            <person name="Mizuno T."/>
            <person name="Morinaga M."/>
            <person name="Sasaki M."/>
            <person name="Togashi T."/>
            <person name="Oyama M."/>
            <person name="Hata H."/>
            <person name="Watanabe M."/>
            <person name="Komatsu T."/>
            <person name="Mizushima-Sugano J."/>
            <person name="Satoh T."/>
            <person name="Shirai Y."/>
            <person name="Takahashi Y."/>
            <person name="Nakagawa K."/>
            <person name="Okumura K."/>
            <person name="Nagase T."/>
            <person name="Nomura N."/>
            <person name="Kikuchi H."/>
            <person name="Masuho Y."/>
            <person name="Yamashita R."/>
            <person name="Nakai K."/>
            <person name="Yada T."/>
            <person name="Nakamura Y."/>
            <person name="Ohara O."/>
            <person name="Isogai T."/>
            <person name="Sugano S."/>
        </authorList>
    </citation>
    <scope>NUCLEOTIDE SEQUENCE [LARGE SCALE MRNA]</scope>
    <source>
        <tissue>Mammary gland</tissue>
    </source>
</reference>
<reference key="4">
    <citation type="submission" date="2005-09" db="EMBL/GenBank/DDBJ databases">
        <authorList>
            <person name="Mural R.J."/>
            <person name="Istrail S."/>
            <person name="Sutton G.G."/>
            <person name="Florea L."/>
            <person name="Halpern A.L."/>
            <person name="Mobarry C.M."/>
            <person name="Lippert R."/>
            <person name="Walenz B."/>
            <person name="Shatkay H."/>
            <person name="Dew I."/>
            <person name="Miller J.R."/>
            <person name="Flanigan M.J."/>
            <person name="Edwards N.J."/>
            <person name="Bolanos R."/>
            <person name="Fasulo D."/>
            <person name="Halldorsson B.V."/>
            <person name="Hannenhalli S."/>
            <person name="Turner R."/>
            <person name="Yooseph S."/>
            <person name="Lu F."/>
            <person name="Nusskern D.R."/>
            <person name="Shue B.C."/>
            <person name="Zheng X.H."/>
            <person name="Zhong F."/>
            <person name="Delcher A.L."/>
            <person name="Huson D.H."/>
            <person name="Kravitz S.A."/>
            <person name="Mouchard L."/>
            <person name="Reinert K."/>
            <person name="Remington K.A."/>
            <person name="Clark A.G."/>
            <person name="Waterman M.S."/>
            <person name="Eichler E.E."/>
            <person name="Adams M.D."/>
            <person name="Hunkapiller M.W."/>
            <person name="Myers E.W."/>
            <person name="Venter J.C."/>
        </authorList>
    </citation>
    <scope>NUCLEOTIDE SEQUENCE [LARGE SCALE GENOMIC DNA]</scope>
</reference>
<reference key="5">
    <citation type="journal article" date="2004" name="Genome Res.">
        <title>The status, quality, and expansion of the NIH full-length cDNA project: the Mammalian Gene Collection (MGC).</title>
        <authorList>
            <consortium name="The MGC Project Team"/>
        </authorList>
    </citation>
    <scope>NUCLEOTIDE SEQUENCE [LARGE SCALE MRNA]</scope>
    <source>
        <tissue>Brain</tissue>
    </source>
</reference>
<keyword id="KW-0002">3D-structure</keyword>
<keyword id="KW-1015">Disulfide bond</keyword>
<keyword id="KW-0272">Extracellular matrix</keyword>
<keyword id="KW-0325">Glycoprotein</keyword>
<keyword id="KW-0433">Leucine-rich repeat</keyword>
<keyword id="KW-1267">Proteomics identification</keyword>
<keyword id="KW-1185">Reference proteome</keyword>
<keyword id="KW-0677">Repeat</keyword>
<keyword id="KW-0964">Secreted</keyword>
<keyword id="KW-0732">Signal</keyword>
<organism>
    <name type="scientific">Homo sapiens</name>
    <name type="common">Human</name>
    <dbReference type="NCBI Taxonomy" id="9606"/>
    <lineage>
        <taxon>Eukaryota</taxon>
        <taxon>Metazoa</taxon>
        <taxon>Chordata</taxon>
        <taxon>Craniata</taxon>
        <taxon>Vertebrata</taxon>
        <taxon>Euteleostomi</taxon>
        <taxon>Mammalia</taxon>
        <taxon>Eutheria</taxon>
        <taxon>Euarchontoglires</taxon>
        <taxon>Primates</taxon>
        <taxon>Haplorrhini</taxon>
        <taxon>Catarrhini</taxon>
        <taxon>Hominidae</taxon>
        <taxon>Homo</taxon>
    </lineage>
</organism>
<gene>
    <name type="primary">CHAD</name>
    <name type="synonym">SLRR4A</name>
</gene>
<feature type="signal peptide" evidence="2">
    <location>
        <begin position="1"/>
        <end position="22"/>
    </location>
</feature>
<feature type="chain" id="PRO_0000032773" description="Chondroadherin">
    <location>
        <begin position="23"/>
        <end position="359"/>
    </location>
</feature>
<feature type="domain" description="LRRNT">
    <location>
        <begin position="23"/>
        <end position="52"/>
    </location>
</feature>
<feature type="repeat" description="LRR 1">
    <location>
        <begin position="76"/>
        <end position="97"/>
    </location>
</feature>
<feature type="repeat" description="LRR 2">
    <location>
        <begin position="100"/>
        <end position="121"/>
    </location>
</feature>
<feature type="repeat" description="LRR 3">
    <location>
        <begin position="124"/>
        <end position="145"/>
    </location>
</feature>
<feature type="repeat" description="LRR 4">
    <location>
        <begin position="148"/>
        <end position="169"/>
    </location>
</feature>
<feature type="repeat" description="LRR 5">
    <location>
        <begin position="172"/>
        <end position="193"/>
    </location>
</feature>
<feature type="repeat" description="LRR 6">
    <location>
        <begin position="196"/>
        <end position="217"/>
    </location>
</feature>
<feature type="repeat" description="LRR 7">
    <location>
        <begin position="220"/>
        <end position="241"/>
    </location>
</feature>
<feature type="repeat" description="LRR 8">
    <location>
        <begin position="245"/>
        <end position="266"/>
    </location>
</feature>
<feature type="repeat" description="LRR 9">
    <location>
        <begin position="269"/>
        <end position="290"/>
    </location>
</feature>
<feature type="domain" description="LRRCT">
    <location>
        <begin position="300"/>
        <end position="348"/>
    </location>
</feature>
<feature type="glycosylation site" description="O-linked (GalNAc...) serine" evidence="2">
    <location>
        <position position="144"/>
    </location>
</feature>
<feature type="disulfide bond" evidence="1">
    <location>
        <begin position="23"/>
        <end position="38"/>
    </location>
</feature>
<feature type="disulfide bond" evidence="1">
    <location>
        <begin position="304"/>
        <end position="346"/>
    </location>
</feature>
<feature type="disulfide bond" evidence="1">
    <location>
        <begin position="306"/>
        <end position="326"/>
    </location>
</feature>
<feature type="sequence variant" id="VAR_052019" description="In dbSNP:rs35218093.">
    <original>R</original>
    <variation>Q</variation>
    <location>
        <position position="312"/>
    </location>
</feature>
<feature type="sequence variant" id="VAR_030631" description="In dbSNP:rs2231510.">
    <original>T</original>
    <variation>I</variation>
    <location>
        <position position="350"/>
    </location>
</feature>
<feature type="sequence conflict" description="In Ref. 1; AAC13410." evidence="3" ref="1">
    <original>L</original>
    <variation>V</variation>
    <location>
        <position position="114"/>
    </location>
</feature>
<feature type="sequence conflict" description="In Ref. 1; AAC13410." evidence="3" ref="1">
    <original>A</original>
    <variation>P</variation>
    <location>
        <position position="166"/>
    </location>
</feature>
<feature type="strand" evidence="4">
    <location>
        <begin position="28"/>
        <end position="30"/>
    </location>
</feature>
<feature type="turn" evidence="4">
    <location>
        <begin position="31"/>
        <end position="34"/>
    </location>
</feature>
<feature type="strand" evidence="4">
    <location>
        <begin position="35"/>
        <end position="37"/>
    </location>
</feature>
<feature type="strand" evidence="4">
    <location>
        <begin position="55"/>
        <end position="57"/>
    </location>
</feature>
<feature type="strand" evidence="4">
    <location>
        <begin position="64"/>
        <end position="66"/>
    </location>
</feature>
<feature type="turn" evidence="4">
    <location>
        <begin position="68"/>
        <end position="73"/>
    </location>
</feature>
<feature type="strand" evidence="4">
    <location>
        <begin position="79"/>
        <end position="81"/>
    </location>
</feature>
<feature type="turn" evidence="4">
    <location>
        <begin position="92"/>
        <end position="97"/>
    </location>
</feature>
<feature type="strand" evidence="4">
    <location>
        <begin position="103"/>
        <end position="105"/>
    </location>
</feature>
<feature type="turn" evidence="4">
    <location>
        <begin position="116"/>
        <end position="121"/>
    </location>
</feature>
<feature type="strand" evidence="4">
    <location>
        <begin position="127"/>
        <end position="129"/>
    </location>
</feature>
<feature type="turn" evidence="4">
    <location>
        <begin position="140"/>
        <end position="145"/>
    </location>
</feature>
<feature type="strand" evidence="4">
    <location>
        <begin position="151"/>
        <end position="153"/>
    </location>
</feature>
<feature type="turn" evidence="4">
    <location>
        <begin position="164"/>
        <end position="169"/>
    </location>
</feature>
<feature type="strand" evidence="4">
    <location>
        <begin position="175"/>
        <end position="177"/>
    </location>
</feature>
<feature type="turn" evidence="4">
    <location>
        <begin position="188"/>
        <end position="191"/>
    </location>
</feature>
<feature type="helix" evidence="4">
    <location>
        <begin position="192"/>
        <end position="194"/>
    </location>
</feature>
<feature type="strand" evidence="4">
    <location>
        <begin position="198"/>
        <end position="201"/>
    </location>
</feature>
<feature type="helix" evidence="4">
    <location>
        <begin position="212"/>
        <end position="215"/>
    </location>
</feature>
<feature type="strand" evidence="4">
    <location>
        <begin position="222"/>
        <end position="225"/>
    </location>
</feature>
<feature type="turn" evidence="4">
    <location>
        <begin position="236"/>
        <end position="239"/>
    </location>
</feature>
<feature type="helix" evidence="4">
    <location>
        <begin position="240"/>
        <end position="242"/>
    </location>
</feature>
<feature type="turn" evidence="4">
    <location>
        <begin position="243"/>
        <end position="245"/>
    </location>
</feature>
<feature type="strand" evidence="4">
    <location>
        <begin position="248"/>
        <end position="250"/>
    </location>
</feature>
<feature type="turn" evidence="4">
    <location>
        <begin position="261"/>
        <end position="266"/>
    </location>
</feature>
<feature type="strand" evidence="4">
    <location>
        <begin position="272"/>
        <end position="274"/>
    </location>
</feature>
<feature type="strand" evidence="4">
    <location>
        <begin position="294"/>
        <end position="296"/>
    </location>
</feature>
<feature type="helix" evidence="4">
    <location>
        <begin position="306"/>
        <end position="308"/>
    </location>
</feature>
<feature type="helix" evidence="4">
    <location>
        <begin position="309"/>
        <end position="317"/>
    </location>
</feature>
<feature type="strand" evidence="5">
    <location>
        <begin position="325"/>
        <end position="329"/>
    </location>
</feature>
<feature type="helix" evidence="4">
    <location>
        <begin position="330"/>
        <end position="332"/>
    </location>
</feature>
<feature type="turn" evidence="4">
    <location>
        <begin position="337"/>
        <end position="339"/>
    </location>
</feature>
<feature type="turn" evidence="5">
    <location>
        <begin position="342"/>
        <end position="345"/>
    </location>
</feature>
<accession>O15335</accession>
<accession>A8K812</accession>
<accession>Q6GTU0</accession>
<accession>Q96RJ5</accession>
<comment type="function">
    <text evidence="1">Promotes attachment of chondrocytes, fibroblasts, and osteoblasts. This binding is mediated (at least for chondrocytes and fibroblasts) by the integrin alpha(2)beta(1). May play an important role in the regulation of chondrocyte growth and proliferation (By similarity).</text>
</comment>
<comment type="subunit">
    <text evidence="1">Mostly monomeric (By similarity). Interacts with collagen type II.</text>
</comment>
<comment type="interaction">
    <interactant intactId="EBI-21895311">
        <id>O15335</id>
    </interactant>
    <interactant intactId="EBI-723824">
        <id>Q8N129</id>
        <label>CNPY4</label>
    </interactant>
    <organismsDiffer>false</organismsDiffer>
    <experiments>2</experiments>
</comment>
<comment type="subcellular location">
    <subcellularLocation>
        <location evidence="1">Secreted</location>
        <location evidence="1">Extracellular space</location>
        <location evidence="1">Extracellular matrix</location>
    </subcellularLocation>
</comment>
<comment type="tissue specificity">
    <text>Present in chondrocytes at all ages.</text>
</comment>
<comment type="similarity">
    <text evidence="3">Belongs to the small leucine-rich proteoglycan (SLRP) family. SLRP class IV subfamily.</text>
</comment>
<evidence type="ECO:0000250" key="1"/>
<evidence type="ECO:0000255" key="2"/>
<evidence type="ECO:0000305" key="3"/>
<evidence type="ECO:0007829" key="4">
    <source>
        <dbReference type="PDB" id="5LFN"/>
    </source>
</evidence>
<evidence type="ECO:0007829" key="5">
    <source>
        <dbReference type="PDB" id="5MX1"/>
    </source>
</evidence>
<sequence length="359" mass="40476">MVRPMLLLSLGLLAGLLPALAACPQNCHCHSDLQHVICDKVGLQKIPKVSEKTKLLNLQRNNFPVLAANSFRAMPNLVSLHLQHCQIREVAAGAFRGLKQLIYLYLSHNDIRVLRAGAFDDLTELTYLYLDHNKVTELPRGLLSPLVNLFILQLNNNKIRELRAGAFQGAKDLRWLYLSENALSSLQPGALDDVENLAKFHVDRNQLSSYPSAALSKLRVVEELKLSHNPLKSIPDNAFQSFGRYLETLWLDNTNLEKFSDGAFLGVTTLKHVHLENNRLNQLPSNFPFDSLETLALTNNPWKCTCQLRGLRRWLEAKASRPDATCASPAKFKGQHIRDTDAFRSCKFPTKRSKKAGRH</sequence>